<gene>
    <name type="primary">SPMS</name>
    <name type="synonym">SPDS3</name>
    <name type="ordered locus">At5g53120</name>
    <name type="ORF">MFH8.5</name>
</gene>
<organism>
    <name type="scientific">Arabidopsis thaliana</name>
    <name type="common">Mouse-ear cress</name>
    <dbReference type="NCBI Taxonomy" id="3702"/>
    <lineage>
        <taxon>Eukaryota</taxon>
        <taxon>Viridiplantae</taxon>
        <taxon>Streptophyta</taxon>
        <taxon>Embryophyta</taxon>
        <taxon>Tracheophyta</taxon>
        <taxon>Spermatophyta</taxon>
        <taxon>Magnoliopsida</taxon>
        <taxon>eudicotyledons</taxon>
        <taxon>Gunneridae</taxon>
        <taxon>Pentapetalae</taxon>
        <taxon>rosids</taxon>
        <taxon>malvids</taxon>
        <taxon>Brassicales</taxon>
        <taxon>Brassicaceae</taxon>
        <taxon>Camelineae</taxon>
        <taxon>Arabidopsis</taxon>
    </lineage>
</organism>
<feature type="chain" id="PRO_0000397673" description="Spermine synthase">
    <location>
        <begin position="1"/>
        <end position="359"/>
    </location>
</feature>
<feature type="domain" description="PABS">
    <location>
        <begin position="53"/>
        <end position="304"/>
    </location>
</feature>
<feature type="active site" description="Proton acceptor" evidence="1">
    <location>
        <position position="224"/>
    </location>
</feature>
<feature type="binding site" evidence="1">
    <location>
        <position position="99"/>
    </location>
    <ligand>
        <name>S-adenosyl 3-(methylsulfanyl)propylamine</name>
        <dbReference type="ChEBI" id="CHEBI:57443"/>
    </ligand>
</feature>
<feature type="binding site" evidence="1">
    <location>
        <position position="129"/>
    </location>
    <ligand>
        <name>spermidine</name>
        <dbReference type="ChEBI" id="CHEBI:57834"/>
    </ligand>
</feature>
<feature type="binding site" evidence="1">
    <location>
        <position position="130"/>
    </location>
    <ligand>
        <name>S-adenosyl 3-(methylsulfanyl)propylamine</name>
        <dbReference type="ChEBI" id="CHEBI:57443"/>
    </ligand>
</feature>
<feature type="binding site" evidence="1">
    <location>
        <position position="154"/>
    </location>
    <ligand>
        <name>spermidine</name>
        <dbReference type="ChEBI" id="CHEBI:57834"/>
    </ligand>
</feature>
<feature type="binding site" evidence="1">
    <location>
        <position position="174"/>
    </location>
    <ligand>
        <name>S-adenosyl 3-(methylsulfanyl)propylamine</name>
        <dbReference type="ChEBI" id="CHEBI:57443"/>
    </ligand>
</feature>
<feature type="binding site" evidence="1">
    <location>
        <begin position="205"/>
        <end position="206"/>
    </location>
    <ligand>
        <name>S-adenosyl 3-(methylsulfanyl)propylamine</name>
        <dbReference type="ChEBI" id="CHEBI:57443"/>
    </ligand>
</feature>
<feature type="binding site" evidence="1">
    <location>
        <position position="292"/>
    </location>
    <ligand>
        <name>putrescine</name>
        <dbReference type="ChEBI" id="CHEBI:326268"/>
    </ligand>
</feature>
<feature type="sequence conflict" description="In Ref. 4; BAH19534." evidence="6" ref="4">
    <original>V</original>
    <variation>E</variation>
    <location>
        <position position="40"/>
    </location>
</feature>
<feature type="sequence conflict" description="In Ref. 5; AAM64782." evidence="6" ref="5">
    <original>G</original>
    <variation>S</variation>
    <location>
        <position position="204"/>
    </location>
</feature>
<feature type="sequence conflict" description="In Ref. 3; AAL11565." evidence="6" ref="3">
    <original>D</original>
    <variation>N</variation>
    <location>
        <position position="224"/>
    </location>
</feature>
<reference key="1">
    <citation type="submission" date="1999-04" db="EMBL/GenBank/DDBJ databases">
        <title>Structural analysis of Arabidopsis thaliana chromosome 5. XI.</title>
        <authorList>
            <person name="Kaneko T."/>
            <person name="Katoh T."/>
            <person name="Asamizu E."/>
            <person name="Sato S."/>
            <person name="Nakamura Y."/>
            <person name="Kotani H."/>
            <person name="Tabata S."/>
        </authorList>
    </citation>
    <scope>NUCLEOTIDE SEQUENCE [LARGE SCALE GENOMIC DNA]</scope>
    <source>
        <strain>cv. Columbia</strain>
    </source>
</reference>
<reference key="2">
    <citation type="journal article" date="2017" name="Plant J.">
        <title>Araport11: a complete reannotation of the Arabidopsis thaliana reference genome.</title>
        <authorList>
            <person name="Cheng C.Y."/>
            <person name="Krishnakumar V."/>
            <person name="Chan A.P."/>
            <person name="Thibaud-Nissen F."/>
            <person name="Schobel S."/>
            <person name="Town C.D."/>
        </authorList>
    </citation>
    <scope>GENOME REANNOTATION</scope>
    <source>
        <strain>cv. Columbia</strain>
    </source>
</reference>
<reference key="3">
    <citation type="journal article" date="2003" name="Science">
        <title>Empirical analysis of transcriptional activity in the Arabidopsis genome.</title>
        <authorList>
            <person name="Yamada K."/>
            <person name="Lim J."/>
            <person name="Dale J.M."/>
            <person name="Chen H."/>
            <person name="Shinn P."/>
            <person name="Palm C.J."/>
            <person name="Southwick A.M."/>
            <person name="Wu H.C."/>
            <person name="Kim C.J."/>
            <person name="Nguyen M."/>
            <person name="Pham P.K."/>
            <person name="Cheuk R.F."/>
            <person name="Karlin-Newmann G."/>
            <person name="Liu S.X."/>
            <person name="Lam B."/>
            <person name="Sakano H."/>
            <person name="Wu T."/>
            <person name="Yu G."/>
            <person name="Miranda M."/>
            <person name="Quach H.L."/>
            <person name="Tripp M."/>
            <person name="Chang C.H."/>
            <person name="Lee J.M."/>
            <person name="Toriumi M.J."/>
            <person name="Chan M.M."/>
            <person name="Tang C.C."/>
            <person name="Onodera C.S."/>
            <person name="Deng J.M."/>
            <person name="Akiyama K."/>
            <person name="Ansari Y."/>
            <person name="Arakawa T."/>
            <person name="Banh J."/>
            <person name="Banno F."/>
            <person name="Bowser L."/>
            <person name="Brooks S.Y."/>
            <person name="Carninci P."/>
            <person name="Chao Q."/>
            <person name="Choy N."/>
            <person name="Enju A."/>
            <person name="Goldsmith A.D."/>
            <person name="Gurjal M."/>
            <person name="Hansen N.F."/>
            <person name="Hayashizaki Y."/>
            <person name="Johnson-Hopson C."/>
            <person name="Hsuan V.W."/>
            <person name="Iida K."/>
            <person name="Karnes M."/>
            <person name="Khan S."/>
            <person name="Koesema E."/>
            <person name="Ishida J."/>
            <person name="Jiang P.X."/>
            <person name="Jones T."/>
            <person name="Kawai J."/>
            <person name="Kamiya A."/>
            <person name="Meyers C."/>
            <person name="Nakajima M."/>
            <person name="Narusaka M."/>
            <person name="Seki M."/>
            <person name="Sakurai T."/>
            <person name="Satou M."/>
            <person name="Tamse R."/>
            <person name="Vaysberg M."/>
            <person name="Wallender E.K."/>
            <person name="Wong C."/>
            <person name="Yamamura Y."/>
            <person name="Yuan S."/>
            <person name="Shinozaki K."/>
            <person name="Davis R.W."/>
            <person name="Theologis A."/>
            <person name="Ecker J.R."/>
        </authorList>
    </citation>
    <scope>NUCLEOTIDE SEQUENCE [LARGE SCALE MRNA]</scope>
    <source>
        <strain>cv. Columbia</strain>
    </source>
</reference>
<reference key="4">
    <citation type="journal article" date="2009" name="DNA Res.">
        <title>Analysis of multiple occurrences of alternative splicing events in Arabidopsis thaliana using novel sequenced full-length cDNAs.</title>
        <authorList>
            <person name="Iida K."/>
            <person name="Fukami-Kobayashi K."/>
            <person name="Toyoda A."/>
            <person name="Sakaki Y."/>
            <person name="Kobayashi M."/>
            <person name="Seki M."/>
            <person name="Shinozaki K."/>
        </authorList>
    </citation>
    <scope>NUCLEOTIDE SEQUENCE [LARGE SCALE MRNA]</scope>
    <source>
        <tissue>Rosette leaf</tissue>
    </source>
</reference>
<reference key="5">
    <citation type="submission" date="2002-03" db="EMBL/GenBank/DDBJ databases">
        <title>Full-length cDNA from Arabidopsis thaliana.</title>
        <authorList>
            <person name="Brover V.V."/>
            <person name="Troukhan M.E."/>
            <person name="Alexandrov N.A."/>
            <person name="Lu Y.-P."/>
            <person name="Flavell R.B."/>
            <person name="Feldmann K.A."/>
        </authorList>
    </citation>
    <scope>NUCLEOTIDE SEQUENCE [LARGE SCALE MRNA]</scope>
</reference>
<reference key="6">
    <citation type="journal article" date="2002" name="FEBS Lett.">
        <title>Characterization of the spermidine synthase-related gene family in Arabidopsis thaliana.</title>
        <authorList>
            <person name="Hanzawa Y."/>
            <person name="Imai A."/>
            <person name="Michael A.J."/>
            <person name="Komeda Y."/>
            <person name="Takahashi T."/>
        </authorList>
    </citation>
    <scope>IDENTIFICATION</scope>
    <scope>INDUCTION BY ABSCISIC ACID</scope>
    <scope>TISSUE SPECIFICITY</scope>
</reference>
<reference key="7">
    <citation type="journal article" date="2002" name="Plant Cell">
        <title>A polyamine metabolon involving aminopropyl transferase complexes in Arabidopsis.</title>
        <authorList>
            <person name="Panicot M."/>
            <person name="Minguet E.G."/>
            <person name="Ferrando A."/>
            <person name="Alcazar R."/>
            <person name="Blazquez M.A."/>
            <person name="Carbonell J."/>
            <person name="Altabella T."/>
            <person name="Koncz C."/>
            <person name="Tiburcio A.F."/>
        </authorList>
    </citation>
    <scope>FUNCTION</scope>
    <scope>INTERACTION WITH SPDSYN1 AND SPDSYN2</scope>
</reference>
<reference key="8">
    <citation type="journal article" date="2007" name="FEBS Lett.">
        <title>Putative spermine synthases from Thalassiosira pseudonana and Arabidopsis thaliana synthesize thermospermine rather than spermine.</title>
        <authorList>
            <person name="Knott J.M."/>
            <person name="Romer P."/>
            <person name="Sumper M."/>
        </authorList>
    </citation>
    <scope>FUNCTION</scope>
    <scope>CATALYTIC ACTIVITY</scope>
</reference>
<reference key="9">
    <citation type="journal article" date="2010" name="Plant Physiol. Biochem.">
        <title>Quantitative analysis of plant polyamines including thermospermine during growth and salinity stress.</title>
        <authorList>
            <person name="Naka Y."/>
            <person name="Watanabe K."/>
            <person name="Sagor G.H."/>
            <person name="Niitsu M."/>
            <person name="Pillai M.A."/>
            <person name="Kusano T."/>
            <person name="Takahashi Y."/>
        </authorList>
    </citation>
    <scope>INDUCTION BY SALT</scope>
</reference>
<sequence>MEGDVGIGLVCQNTMDGKASNGNGLEKTVPSCCLKAMACVPEDDAKCHSTVVSGWFSEPHPRSGKKGGKAVYFNNPMWPGEAHSLKVEKVLFKDKSDFQEVLVFESATYGKVLVLDGIVQLTEKDECAYQEMIAHLPLCSISSPKNVLVVGGGDGGVLREISRHSSVEVIDICEIDKMVIDVSKKFFPELAVGFDDPRVQLHIGDAAEFLRKSPEGKYDAIIVDSSDPVGPALALVEKPFFETLARALKPGGVLCNMAESMWLHTHLIEDMISICRQTFKSVHYAWSSVPTYPSGVIGFVLCSTEGPAVDFKNPINPIEKLDGAMTHKRELKFYNSDMHRAAFALPTFLRREVASLLAS</sequence>
<comment type="catalytic activity">
    <reaction evidence="4">
        <text>S-adenosyl 3-(methylsulfanyl)propylamine + spermidine = spermine + S-methyl-5'-thioadenosine + H(+)</text>
        <dbReference type="Rhea" id="RHEA:19973"/>
        <dbReference type="ChEBI" id="CHEBI:15378"/>
        <dbReference type="ChEBI" id="CHEBI:17509"/>
        <dbReference type="ChEBI" id="CHEBI:45725"/>
        <dbReference type="ChEBI" id="CHEBI:57443"/>
        <dbReference type="ChEBI" id="CHEBI:57834"/>
        <dbReference type="EC" id="2.5.1.22"/>
    </reaction>
</comment>
<comment type="pathway">
    <text>Amine and polyamine biosynthesis; spermine biosynthesis; spermine from spermidine: step 1/1.</text>
</comment>
<comment type="subunit">
    <text evidence="3">Heterodimer. Component of a multiprotein complex. Interacts with SPDSYN1 and SPDSYN2.</text>
</comment>
<comment type="interaction">
    <interactant intactId="EBI-1770109">
        <id>Q94BN2</id>
    </interactant>
    <interactant intactId="EBI-1770123">
        <id>Q9ZUB3</id>
        <label>SPDSYN1</label>
    </interactant>
    <organismsDiffer>false</organismsDiffer>
    <experiments>4</experiments>
</comment>
<comment type="interaction">
    <interactant intactId="EBI-1770109">
        <id>Q94BN2</id>
    </interactant>
    <interactant intactId="EBI-1770100">
        <id>O48661</id>
        <label>SPDSYN2</label>
    </interactant>
    <organismsDiffer>false</organismsDiffer>
    <experiments>4</experiments>
</comment>
<comment type="alternative products">
    <event type="alternative splicing"/>
    <isoform>
        <id>Q94BN2-1</id>
        <name>1</name>
        <sequence type="displayed"/>
    </isoform>
    <text>A number of isoforms are produced. According to EST sequences.</text>
</comment>
<comment type="tissue specificity">
    <text evidence="2">Expressed predominantly in stem internodes, flower buds and roots.</text>
</comment>
<comment type="induction">
    <text evidence="2 5">Up-regulated by abscisic acid and salt stress.</text>
</comment>
<comment type="similarity">
    <text evidence="6">Belongs to the spermidine/spermine synthase family.</text>
</comment>
<comment type="sequence caution" evidence="6">
    <conflict type="erroneous initiation">
        <sequence resource="EMBL-CDS" id="AAM64782"/>
    </conflict>
    <text>Truncated N-terminus.</text>
</comment>
<comment type="sequence caution" evidence="6">
    <conflict type="erroneous gene model prediction">
        <sequence resource="EMBL-CDS" id="BAB08415"/>
    </conflict>
</comment>
<name>SPSY_ARATH</name>
<accession>Q94BN2</accession>
<accession>B9DFL7</accession>
<accession>Q8LBG3</accession>
<accession>Q944S0</accession>
<accession>Q9FGM4</accession>
<evidence type="ECO:0000250" key="1"/>
<evidence type="ECO:0000269" key="2">
    <source>
    </source>
</evidence>
<evidence type="ECO:0000269" key="3">
    <source>
    </source>
</evidence>
<evidence type="ECO:0000269" key="4">
    <source>
    </source>
</evidence>
<evidence type="ECO:0000269" key="5">
    <source>
    </source>
</evidence>
<evidence type="ECO:0000305" key="6"/>
<keyword id="KW-0025">Alternative splicing</keyword>
<keyword id="KW-0620">Polyamine biosynthesis</keyword>
<keyword id="KW-1185">Reference proteome</keyword>
<keyword id="KW-0808">Transferase</keyword>
<protein>
    <recommendedName>
        <fullName>Spermine synthase</fullName>
        <shortName>SPMSY</shortName>
        <ecNumber>2.5.1.22</ecNumber>
    </recommendedName>
    <alternativeName>
        <fullName>Spermidine aminopropyltransferase</fullName>
    </alternativeName>
</protein>
<proteinExistence type="evidence at protein level"/>
<dbReference type="EC" id="2.5.1.22"/>
<dbReference type="EMBL" id="AB025622">
    <property type="protein sequence ID" value="BAB08415.1"/>
    <property type="status" value="ALT_SEQ"/>
    <property type="molecule type" value="Genomic_DNA"/>
</dbReference>
<dbReference type="EMBL" id="CP002688">
    <property type="protein sequence ID" value="AED96305.1"/>
    <property type="molecule type" value="Genomic_DNA"/>
</dbReference>
<dbReference type="EMBL" id="CP002688">
    <property type="protein sequence ID" value="AED96306.1"/>
    <property type="molecule type" value="Genomic_DNA"/>
</dbReference>
<dbReference type="EMBL" id="CP002688">
    <property type="protein sequence ID" value="AED96307.1"/>
    <property type="molecule type" value="Genomic_DNA"/>
</dbReference>
<dbReference type="EMBL" id="CP002688">
    <property type="protein sequence ID" value="AED96308.1"/>
    <property type="molecule type" value="Genomic_DNA"/>
</dbReference>
<dbReference type="EMBL" id="CP002688">
    <property type="protein sequence ID" value="AED96309.1"/>
    <property type="molecule type" value="Genomic_DNA"/>
</dbReference>
<dbReference type="EMBL" id="AF424571">
    <property type="protein sequence ID" value="AAL11565.1"/>
    <property type="molecule type" value="mRNA"/>
</dbReference>
<dbReference type="EMBL" id="AY040013">
    <property type="protein sequence ID" value="AAK64170.1"/>
    <property type="molecule type" value="mRNA"/>
</dbReference>
<dbReference type="EMBL" id="AY079367">
    <property type="protein sequence ID" value="AAL85098.1"/>
    <property type="molecule type" value="mRNA"/>
</dbReference>
<dbReference type="EMBL" id="BT000742">
    <property type="protein sequence ID" value="AAN31883.1"/>
    <property type="molecule type" value="mRNA"/>
</dbReference>
<dbReference type="EMBL" id="AK316822">
    <property type="protein sequence ID" value="BAH19534.1"/>
    <property type="molecule type" value="mRNA"/>
</dbReference>
<dbReference type="EMBL" id="AY087226">
    <property type="protein sequence ID" value="AAM64782.1"/>
    <property type="status" value="ALT_INIT"/>
    <property type="molecule type" value="mRNA"/>
</dbReference>
<dbReference type="RefSeq" id="NP_001078748.1">
    <molecule id="Q94BN2-1"/>
    <property type="nucleotide sequence ID" value="NM_001085279.1"/>
</dbReference>
<dbReference type="RefSeq" id="NP_001078749.1">
    <molecule id="Q94BN2-1"/>
    <property type="nucleotide sequence ID" value="NM_001085280.1"/>
</dbReference>
<dbReference type="RefSeq" id="NP_568785.1">
    <molecule id="Q94BN2-1"/>
    <property type="nucleotide sequence ID" value="NM_124691.3"/>
</dbReference>
<dbReference type="RefSeq" id="NP_851178.1">
    <molecule id="Q94BN2-1"/>
    <property type="nucleotide sequence ID" value="NM_180847.2"/>
</dbReference>
<dbReference type="RefSeq" id="NP_851179.1">
    <molecule id="Q94BN2-1"/>
    <property type="nucleotide sequence ID" value="NM_180848.3"/>
</dbReference>
<dbReference type="SMR" id="Q94BN2"/>
<dbReference type="BioGRID" id="20637">
    <property type="interactions" value="4"/>
</dbReference>
<dbReference type="FunCoup" id="Q94BN2">
    <property type="interactions" value="2582"/>
</dbReference>
<dbReference type="IntAct" id="Q94BN2">
    <property type="interactions" value="2"/>
</dbReference>
<dbReference type="STRING" id="3702.Q94BN2"/>
<dbReference type="PaxDb" id="3702-AT5G53120.6"/>
<dbReference type="EnsemblPlants" id="AT5G53120.1">
    <molecule id="Q94BN2-1"/>
    <property type="protein sequence ID" value="AT5G53120.1"/>
    <property type="gene ID" value="AT5G53120"/>
</dbReference>
<dbReference type="EnsemblPlants" id="AT5G53120.2">
    <molecule id="Q94BN2-1"/>
    <property type="protein sequence ID" value="AT5G53120.2"/>
    <property type="gene ID" value="AT5G53120"/>
</dbReference>
<dbReference type="EnsemblPlants" id="AT5G53120.3">
    <molecule id="Q94BN2-1"/>
    <property type="protein sequence ID" value="AT5G53120.3"/>
    <property type="gene ID" value="AT5G53120"/>
</dbReference>
<dbReference type="EnsemblPlants" id="AT5G53120.4">
    <molecule id="Q94BN2-1"/>
    <property type="protein sequence ID" value="AT5G53120.4"/>
    <property type="gene ID" value="AT5G53120"/>
</dbReference>
<dbReference type="EnsemblPlants" id="AT5G53120.5">
    <molecule id="Q94BN2-1"/>
    <property type="protein sequence ID" value="AT5G53120.5"/>
    <property type="gene ID" value="AT5G53120"/>
</dbReference>
<dbReference type="GeneID" id="835392"/>
<dbReference type="Gramene" id="AT5G53120.1">
    <molecule id="Q94BN2-1"/>
    <property type="protein sequence ID" value="AT5G53120.1"/>
    <property type="gene ID" value="AT5G53120"/>
</dbReference>
<dbReference type="Gramene" id="AT5G53120.2">
    <molecule id="Q94BN2-1"/>
    <property type="protein sequence ID" value="AT5G53120.2"/>
    <property type="gene ID" value="AT5G53120"/>
</dbReference>
<dbReference type="Gramene" id="AT5G53120.3">
    <molecule id="Q94BN2-1"/>
    <property type="protein sequence ID" value="AT5G53120.3"/>
    <property type="gene ID" value="AT5G53120"/>
</dbReference>
<dbReference type="Gramene" id="AT5G53120.4">
    <molecule id="Q94BN2-1"/>
    <property type="protein sequence ID" value="AT5G53120.4"/>
    <property type="gene ID" value="AT5G53120"/>
</dbReference>
<dbReference type="Gramene" id="AT5G53120.5">
    <molecule id="Q94BN2-1"/>
    <property type="protein sequence ID" value="AT5G53120.5"/>
    <property type="gene ID" value="AT5G53120"/>
</dbReference>
<dbReference type="KEGG" id="ath:AT5G53120"/>
<dbReference type="Araport" id="AT5G53120"/>
<dbReference type="TAIR" id="AT5G53120">
    <property type="gene designation" value="SPDS3"/>
</dbReference>
<dbReference type="eggNOG" id="KOG1562">
    <property type="taxonomic scope" value="Eukaryota"/>
</dbReference>
<dbReference type="HOGENOM" id="CLU_048199_3_0_1"/>
<dbReference type="InParanoid" id="Q94BN2"/>
<dbReference type="PhylomeDB" id="Q94BN2"/>
<dbReference type="UniPathway" id="UPA00249">
    <property type="reaction ID" value="UER00315"/>
</dbReference>
<dbReference type="PRO" id="PR:Q94BN2"/>
<dbReference type="Proteomes" id="UP000006548">
    <property type="component" value="Chromosome 5"/>
</dbReference>
<dbReference type="ExpressionAtlas" id="Q94BN2">
    <property type="expression patterns" value="baseline and differential"/>
</dbReference>
<dbReference type="GO" id="GO:0016768">
    <property type="term" value="F:spermine synthase activity"/>
    <property type="evidence" value="ECO:0007669"/>
    <property type="project" value="UniProtKB-EC"/>
</dbReference>
<dbReference type="GO" id="GO:0006597">
    <property type="term" value="P:spermine biosynthetic process"/>
    <property type="evidence" value="ECO:0007669"/>
    <property type="project" value="UniProtKB-UniPathway"/>
</dbReference>
<dbReference type="CDD" id="cd02440">
    <property type="entry name" value="AdoMet_MTases"/>
    <property type="match status" value="1"/>
</dbReference>
<dbReference type="FunFam" id="2.30.140.10:FF:000003">
    <property type="entry name" value="Spermidine synthase 1"/>
    <property type="match status" value="1"/>
</dbReference>
<dbReference type="FunFam" id="3.40.50.150:FF:000048">
    <property type="entry name" value="Spermidine synthase 1"/>
    <property type="match status" value="1"/>
</dbReference>
<dbReference type="Gene3D" id="2.30.140.10">
    <property type="entry name" value="Spermidine synthase, tetramerisation domain"/>
    <property type="match status" value="1"/>
</dbReference>
<dbReference type="Gene3D" id="3.40.50.150">
    <property type="entry name" value="Vaccinia Virus protein VP39"/>
    <property type="match status" value="1"/>
</dbReference>
<dbReference type="HAMAP" id="MF_00198">
    <property type="entry name" value="Spermidine_synth"/>
    <property type="match status" value="1"/>
</dbReference>
<dbReference type="InterPro" id="IPR030374">
    <property type="entry name" value="PABS"/>
</dbReference>
<dbReference type="InterPro" id="IPR030373">
    <property type="entry name" value="PABS_CS"/>
</dbReference>
<dbReference type="InterPro" id="IPR029063">
    <property type="entry name" value="SAM-dependent_MTases_sf"/>
</dbReference>
<dbReference type="InterPro" id="IPR001045">
    <property type="entry name" value="Spermi_synthase"/>
</dbReference>
<dbReference type="InterPro" id="IPR030668">
    <property type="entry name" value="Spermi_synthase_euk"/>
</dbReference>
<dbReference type="InterPro" id="IPR035246">
    <property type="entry name" value="Spermidine_synt_N"/>
</dbReference>
<dbReference type="InterPro" id="IPR037163">
    <property type="entry name" value="Spermidine_synt_N_sf"/>
</dbReference>
<dbReference type="NCBIfam" id="NF037959">
    <property type="entry name" value="MFS_SpdSyn"/>
    <property type="match status" value="1"/>
</dbReference>
<dbReference type="NCBIfam" id="NF002010">
    <property type="entry name" value="PRK00811.1"/>
    <property type="match status" value="1"/>
</dbReference>
<dbReference type="NCBIfam" id="TIGR00417">
    <property type="entry name" value="speE"/>
    <property type="match status" value="1"/>
</dbReference>
<dbReference type="PANTHER" id="PTHR11558">
    <property type="entry name" value="SPERMIDINE/SPERMINE SYNTHASE"/>
    <property type="match status" value="1"/>
</dbReference>
<dbReference type="PANTHER" id="PTHR11558:SF25">
    <property type="entry name" value="SPERMINE SYNTHASE"/>
    <property type="match status" value="1"/>
</dbReference>
<dbReference type="Pfam" id="PF17284">
    <property type="entry name" value="Spermine_synt_N"/>
    <property type="match status" value="1"/>
</dbReference>
<dbReference type="Pfam" id="PF01564">
    <property type="entry name" value="Spermine_synth"/>
    <property type="match status" value="1"/>
</dbReference>
<dbReference type="PIRSF" id="PIRSF000502">
    <property type="entry name" value="Spermidine_synth"/>
    <property type="match status" value="1"/>
</dbReference>
<dbReference type="SUPFAM" id="SSF53335">
    <property type="entry name" value="S-adenosyl-L-methionine-dependent methyltransferases"/>
    <property type="match status" value="1"/>
</dbReference>
<dbReference type="PROSITE" id="PS01330">
    <property type="entry name" value="PABS_1"/>
    <property type="match status" value="1"/>
</dbReference>
<dbReference type="PROSITE" id="PS51006">
    <property type="entry name" value="PABS_2"/>
    <property type="match status" value="1"/>
</dbReference>